<organism>
    <name type="scientific">Pan troglodytes</name>
    <name type="common">Chimpanzee</name>
    <dbReference type="NCBI Taxonomy" id="9598"/>
    <lineage>
        <taxon>Eukaryota</taxon>
        <taxon>Metazoa</taxon>
        <taxon>Chordata</taxon>
        <taxon>Craniata</taxon>
        <taxon>Vertebrata</taxon>
        <taxon>Euteleostomi</taxon>
        <taxon>Mammalia</taxon>
        <taxon>Eutheria</taxon>
        <taxon>Euarchontoglires</taxon>
        <taxon>Primates</taxon>
        <taxon>Haplorrhini</taxon>
        <taxon>Catarrhini</taxon>
        <taxon>Hominidae</taxon>
        <taxon>Pan</taxon>
    </lineage>
</organism>
<reference key="1">
    <citation type="journal article" date="2003" name="Nature">
        <title>Comparative analyses of multi-species sequences from targeted genomic regions.</title>
        <authorList>
            <person name="Thomas J.W."/>
            <person name="Touchman J.W."/>
            <person name="Blakesley R.W."/>
            <person name="Bouffard G.G."/>
            <person name="Beckstrom-Sternberg S.M."/>
            <person name="Margulies E.H."/>
            <person name="Blanchette M."/>
            <person name="Siepel A.C."/>
            <person name="Thomas P.J."/>
            <person name="McDowell J.C."/>
            <person name="Maskeri B."/>
            <person name="Hansen N.F."/>
            <person name="Schwartz M.S."/>
            <person name="Weber R.J."/>
            <person name="Kent W.J."/>
            <person name="Karolchik D."/>
            <person name="Bruen T.C."/>
            <person name="Bevan R."/>
            <person name="Cutler D.J."/>
            <person name="Schwartz S."/>
            <person name="Elnitski L."/>
            <person name="Idol J.R."/>
            <person name="Prasad A.B."/>
            <person name="Lee-Lin S.-Q."/>
            <person name="Maduro V.V.B."/>
            <person name="Summers T.J."/>
            <person name="Portnoy M.E."/>
            <person name="Dietrich N.L."/>
            <person name="Akhter N."/>
            <person name="Ayele K."/>
            <person name="Benjamin B."/>
            <person name="Cariaga K."/>
            <person name="Brinkley C.P."/>
            <person name="Brooks S.Y."/>
            <person name="Granite S."/>
            <person name="Guan X."/>
            <person name="Gupta J."/>
            <person name="Haghighi P."/>
            <person name="Ho S.-L."/>
            <person name="Huang M.C."/>
            <person name="Karlins E."/>
            <person name="Laric P.L."/>
            <person name="Legaspi R."/>
            <person name="Lim M.J."/>
            <person name="Maduro Q.L."/>
            <person name="Masiello C.A."/>
            <person name="Mastrian S.D."/>
            <person name="McCloskey J.C."/>
            <person name="Pearson R."/>
            <person name="Stantripop S."/>
            <person name="Tiongson E.E."/>
            <person name="Tran J.T."/>
            <person name="Tsurgeon C."/>
            <person name="Vogt J.L."/>
            <person name="Walker M.A."/>
            <person name="Wetherby K.D."/>
            <person name="Wiggins L.S."/>
            <person name="Young A.C."/>
            <person name="Zhang L.-H."/>
            <person name="Osoegawa K."/>
            <person name="Zhu B."/>
            <person name="Zhao B."/>
            <person name="Shu C.L."/>
            <person name="De Jong P.J."/>
            <person name="Lawrence C.E."/>
            <person name="Smit A.F."/>
            <person name="Chakravarti A."/>
            <person name="Haussler D."/>
            <person name="Green P."/>
            <person name="Miller W."/>
            <person name="Green E.D."/>
        </authorList>
    </citation>
    <scope>NUCLEOTIDE SEQUENCE [LARGE SCALE GENOMIC DNA]</scope>
</reference>
<proteinExistence type="inferred from homology"/>
<evidence type="ECO:0000250" key="1"/>
<evidence type="ECO:0000250" key="2">
    <source>
        <dbReference type="UniProtKB" id="P47755"/>
    </source>
</evidence>
<evidence type="ECO:0000305" key="3"/>
<sequence>MADLEEQLSDEEKVRIAAKFIIHAPPGEFNEVFNDVRLLLNNDNLLREGAAHAFAQYNLDQFTPVKIEGYEDQVLITEHGDLGNGKFLDPKNRICFKFDHLRKEATDPRPCEVENAVESWRTSVETALRAYVKEHYPNGVCTVYGKKIDGQQTIIACIESHQFQAKNFWNGRWRSEWKFTITPSTTQVVGILKIQVHYYEDGNVQLVSHKDIQDSLTVSNEVQTAKEFIKIVEAAENEYQTAISENYQTMSDTTFKALRRQLPVTRTKIDWNKILSYKIGKEMQNA</sequence>
<name>CAZA2_PANTR</name>
<comment type="function">
    <text evidence="1">F-actin-capping proteins bind in a Ca(2+)-independent manner to the fast growing ends of actin filaments (barbed end) thereby blocking the exchange of subunits at these ends. Unlike other capping proteins (such as gelsolin and severin), these proteins do not sever actin filaments (By similarity).</text>
</comment>
<comment type="subunit">
    <text evidence="1 2">Component of the F-actin capping complex, composed of a heterodimer of an alpha and a beta subunit. Component of the WASH complex, composed of F-actin-capping protein subunit alpha (CAPZA1, CAPZA2 or CAPZA3), F-actin-capping protein subunit beta (CAPZB), WASHC1, WASHC2, WASHC3, WASHC4 and WASHC5. Interacts with RCSD1/CAPZIP (By similarity). Directly interacts with CRACD; this interaction decreases binding to actin (By similarity).</text>
</comment>
<comment type="similarity">
    <text evidence="3">Belongs to the F-actin-capping protein alpha subunit family.</text>
</comment>
<accession>Q2QLF0</accession>
<dbReference type="EMBL" id="DP000016">
    <property type="protein sequence ID" value="AAR16248.1"/>
    <property type="molecule type" value="Genomic_DNA"/>
</dbReference>
<dbReference type="RefSeq" id="NP_001129289.1">
    <property type="nucleotide sequence ID" value="NM_001135817.1"/>
</dbReference>
<dbReference type="SMR" id="Q2QLF0"/>
<dbReference type="FunCoup" id="Q2QLF0">
    <property type="interactions" value="1962"/>
</dbReference>
<dbReference type="STRING" id="9598.ENSPTRP00000047674"/>
<dbReference type="PaxDb" id="9598-ENSPTRP00000047674"/>
<dbReference type="Ensembl" id="ENSPTRT00000036331.4">
    <property type="protein sequence ID" value="ENSPTRP00000047674.2"/>
    <property type="gene ID" value="ENSPTRG00000019615.5"/>
</dbReference>
<dbReference type="GeneID" id="736736"/>
<dbReference type="KEGG" id="ptr:736736"/>
<dbReference type="CTD" id="830"/>
<dbReference type="VGNC" id="VGNC:7354">
    <property type="gene designation" value="CAPZA2"/>
</dbReference>
<dbReference type="eggNOG" id="KOG0836">
    <property type="taxonomic scope" value="Eukaryota"/>
</dbReference>
<dbReference type="GeneTree" id="ENSGT00950000183119"/>
<dbReference type="HOGENOM" id="CLU_045161_0_0_1"/>
<dbReference type="InParanoid" id="Q2QLF0"/>
<dbReference type="OMA" id="VACIEDH"/>
<dbReference type="OrthoDB" id="3522at9604"/>
<dbReference type="TreeFam" id="TF314822"/>
<dbReference type="Proteomes" id="UP000002277">
    <property type="component" value="Chromosome 7"/>
</dbReference>
<dbReference type="Bgee" id="ENSPTRG00000019615">
    <property type="expression patterns" value="Expressed in Brodmann (1909) area 10 and 21 other cell types or tissues"/>
</dbReference>
<dbReference type="GO" id="GO:0005903">
    <property type="term" value="C:brush border"/>
    <property type="evidence" value="ECO:0007669"/>
    <property type="project" value="Ensembl"/>
</dbReference>
<dbReference type="GO" id="GO:0030863">
    <property type="term" value="C:cortical cytoskeleton"/>
    <property type="evidence" value="ECO:0000318"/>
    <property type="project" value="GO_Central"/>
</dbReference>
<dbReference type="GO" id="GO:0008290">
    <property type="term" value="C:F-actin capping protein complex"/>
    <property type="evidence" value="ECO:0000318"/>
    <property type="project" value="GO_Central"/>
</dbReference>
<dbReference type="GO" id="GO:0016020">
    <property type="term" value="C:membrane"/>
    <property type="evidence" value="ECO:0007669"/>
    <property type="project" value="Ensembl"/>
</dbReference>
<dbReference type="GO" id="GO:0051015">
    <property type="term" value="F:actin filament binding"/>
    <property type="evidence" value="ECO:0000318"/>
    <property type="project" value="GO_Central"/>
</dbReference>
<dbReference type="GO" id="GO:0030036">
    <property type="term" value="P:actin cytoskeleton organization"/>
    <property type="evidence" value="ECO:0000318"/>
    <property type="project" value="GO_Central"/>
</dbReference>
<dbReference type="GO" id="GO:0051016">
    <property type="term" value="P:barbed-end actin filament capping"/>
    <property type="evidence" value="ECO:0000318"/>
    <property type="project" value="GO_Central"/>
</dbReference>
<dbReference type="FunFam" id="3.30.1140.60:FF:000001">
    <property type="entry name" value="F-actin-capping protein subunit alpha"/>
    <property type="match status" value="1"/>
</dbReference>
<dbReference type="FunFam" id="3.90.1150.210:FF:000002">
    <property type="entry name" value="F-actin-capping protein subunit alpha"/>
    <property type="match status" value="1"/>
</dbReference>
<dbReference type="Gene3D" id="3.30.1140.60">
    <property type="entry name" value="F-actin capping protein, alpha subunit"/>
    <property type="match status" value="1"/>
</dbReference>
<dbReference type="Gene3D" id="3.90.1150.210">
    <property type="entry name" value="F-actin capping protein, beta subunit"/>
    <property type="match status" value="1"/>
</dbReference>
<dbReference type="InterPro" id="IPR002189">
    <property type="entry name" value="CapZ_alpha"/>
</dbReference>
<dbReference type="InterPro" id="IPR037282">
    <property type="entry name" value="CapZ_alpha/beta"/>
</dbReference>
<dbReference type="InterPro" id="IPR042276">
    <property type="entry name" value="CapZ_alpha/beta_2"/>
</dbReference>
<dbReference type="InterPro" id="IPR042489">
    <property type="entry name" value="CapZ_alpha_1"/>
</dbReference>
<dbReference type="InterPro" id="IPR017865">
    <property type="entry name" value="F-actin_cap_asu_CS"/>
</dbReference>
<dbReference type="PANTHER" id="PTHR10653">
    <property type="entry name" value="F-ACTIN-CAPPING PROTEIN SUBUNIT ALPHA"/>
    <property type="match status" value="1"/>
</dbReference>
<dbReference type="PANTHER" id="PTHR10653:SF2">
    <property type="entry name" value="F-ACTIN-CAPPING PROTEIN SUBUNIT ALPHA-2"/>
    <property type="match status" value="1"/>
</dbReference>
<dbReference type="Pfam" id="PF01267">
    <property type="entry name" value="F-actin_cap_A"/>
    <property type="match status" value="1"/>
</dbReference>
<dbReference type="PRINTS" id="PR00191">
    <property type="entry name" value="FACTINCAPA"/>
</dbReference>
<dbReference type="SUPFAM" id="SSF90096">
    <property type="entry name" value="Subunits of heterodimeric actin filament capping protein Capz"/>
    <property type="match status" value="1"/>
</dbReference>
<dbReference type="PROSITE" id="PS00748">
    <property type="entry name" value="F_ACTIN_CAPPING_A_1"/>
    <property type="match status" value="1"/>
</dbReference>
<dbReference type="PROSITE" id="PS00749">
    <property type="entry name" value="F_ACTIN_CAPPING_A_2"/>
    <property type="match status" value="1"/>
</dbReference>
<protein>
    <recommendedName>
        <fullName>F-actin-capping protein subunit alpha-2</fullName>
    </recommendedName>
    <alternativeName>
        <fullName>CapZ alpha-2</fullName>
    </alternativeName>
</protein>
<keyword id="KW-0007">Acetylation</keyword>
<keyword id="KW-0117">Actin capping</keyword>
<keyword id="KW-0009">Actin-binding</keyword>
<keyword id="KW-0597">Phosphoprotein</keyword>
<keyword id="KW-1185">Reference proteome</keyword>
<feature type="initiator methionine" description="Removed" evidence="2">
    <location>
        <position position="1"/>
    </location>
</feature>
<feature type="chain" id="PRO_0000226058" description="F-actin-capping protein subunit alpha-2">
    <location>
        <begin position="2"/>
        <end position="286"/>
    </location>
</feature>
<feature type="modified residue" description="N-acetylalanine" evidence="2">
    <location>
        <position position="2"/>
    </location>
</feature>
<feature type="modified residue" description="Phosphoserine" evidence="2">
    <location>
        <position position="9"/>
    </location>
</feature>
<gene>
    <name type="primary">CAPZA2</name>
</gene>